<dbReference type="EC" id="3.5.4.16" evidence="1"/>
<dbReference type="EMBL" id="AP009384">
    <property type="protein sequence ID" value="BAF86940.1"/>
    <property type="molecule type" value="Genomic_DNA"/>
</dbReference>
<dbReference type="SMR" id="A8HUG2"/>
<dbReference type="STRING" id="438753.AZC_0942"/>
<dbReference type="KEGG" id="azc:AZC_0942"/>
<dbReference type="eggNOG" id="COG0302">
    <property type="taxonomic scope" value="Bacteria"/>
</dbReference>
<dbReference type="HOGENOM" id="CLU_049768_3_1_5"/>
<dbReference type="UniPathway" id="UPA00848">
    <property type="reaction ID" value="UER00151"/>
</dbReference>
<dbReference type="Proteomes" id="UP000000270">
    <property type="component" value="Chromosome"/>
</dbReference>
<dbReference type="GO" id="GO:0005737">
    <property type="term" value="C:cytoplasm"/>
    <property type="evidence" value="ECO:0007669"/>
    <property type="project" value="TreeGrafter"/>
</dbReference>
<dbReference type="GO" id="GO:0005525">
    <property type="term" value="F:GTP binding"/>
    <property type="evidence" value="ECO:0007669"/>
    <property type="project" value="UniProtKB-KW"/>
</dbReference>
<dbReference type="GO" id="GO:0003934">
    <property type="term" value="F:GTP cyclohydrolase I activity"/>
    <property type="evidence" value="ECO:0007669"/>
    <property type="project" value="UniProtKB-UniRule"/>
</dbReference>
<dbReference type="GO" id="GO:0008270">
    <property type="term" value="F:zinc ion binding"/>
    <property type="evidence" value="ECO:0007669"/>
    <property type="project" value="UniProtKB-UniRule"/>
</dbReference>
<dbReference type="GO" id="GO:0006730">
    <property type="term" value="P:one-carbon metabolic process"/>
    <property type="evidence" value="ECO:0007669"/>
    <property type="project" value="UniProtKB-UniRule"/>
</dbReference>
<dbReference type="GO" id="GO:0006729">
    <property type="term" value="P:tetrahydrobiopterin biosynthetic process"/>
    <property type="evidence" value="ECO:0007669"/>
    <property type="project" value="TreeGrafter"/>
</dbReference>
<dbReference type="GO" id="GO:0046654">
    <property type="term" value="P:tetrahydrofolate biosynthetic process"/>
    <property type="evidence" value="ECO:0007669"/>
    <property type="project" value="UniProtKB-UniRule"/>
</dbReference>
<dbReference type="FunFam" id="1.10.286.10:FF:000001">
    <property type="entry name" value="GTP cyclohydrolase 1"/>
    <property type="match status" value="1"/>
</dbReference>
<dbReference type="FunFam" id="3.30.1130.10:FF:000001">
    <property type="entry name" value="GTP cyclohydrolase 1"/>
    <property type="match status" value="1"/>
</dbReference>
<dbReference type="Gene3D" id="1.10.286.10">
    <property type="match status" value="1"/>
</dbReference>
<dbReference type="Gene3D" id="3.30.1130.10">
    <property type="match status" value="1"/>
</dbReference>
<dbReference type="HAMAP" id="MF_00223">
    <property type="entry name" value="FolE"/>
    <property type="match status" value="1"/>
</dbReference>
<dbReference type="InterPro" id="IPR043133">
    <property type="entry name" value="GTP-CH-I_C/QueF"/>
</dbReference>
<dbReference type="InterPro" id="IPR043134">
    <property type="entry name" value="GTP-CH-I_N"/>
</dbReference>
<dbReference type="InterPro" id="IPR001474">
    <property type="entry name" value="GTP_CycHdrlase_I"/>
</dbReference>
<dbReference type="InterPro" id="IPR018234">
    <property type="entry name" value="GTP_CycHdrlase_I_CS"/>
</dbReference>
<dbReference type="InterPro" id="IPR020602">
    <property type="entry name" value="GTP_CycHdrlase_I_dom"/>
</dbReference>
<dbReference type="NCBIfam" id="TIGR00063">
    <property type="entry name" value="folE"/>
    <property type="match status" value="1"/>
</dbReference>
<dbReference type="NCBIfam" id="NF006825">
    <property type="entry name" value="PRK09347.1-2"/>
    <property type="match status" value="1"/>
</dbReference>
<dbReference type="NCBIfam" id="NF006826">
    <property type="entry name" value="PRK09347.1-3"/>
    <property type="match status" value="1"/>
</dbReference>
<dbReference type="PANTHER" id="PTHR11109:SF7">
    <property type="entry name" value="GTP CYCLOHYDROLASE 1"/>
    <property type="match status" value="1"/>
</dbReference>
<dbReference type="PANTHER" id="PTHR11109">
    <property type="entry name" value="GTP CYCLOHYDROLASE I"/>
    <property type="match status" value="1"/>
</dbReference>
<dbReference type="Pfam" id="PF01227">
    <property type="entry name" value="GTP_cyclohydroI"/>
    <property type="match status" value="1"/>
</dbReference>
<dbReference type="SUPFAM" id="SSF55620">
    <property type="entry name" value="Tetrahydrobiopterin biosynthesis enzymes-like"/>
    <property type="match status" value="1"/>
</dbReference>
<dbReference type="PROSITE" id="PS00859">
    <property type="entry name" value="GTP_CYCLOHYDROL_1_1"/>
    <property type="match status" value="1"/>
</dbReference>
<name>GCH1_AZOC5</name>
<proteinExistence type="inferred from homology"/>
<keyword id="KW-0342">GTP-binding</keyword>
<keyword id="KW-0378">Hydrolase</keyword>
<keyword id="KW-0479">Metal-binding</keyword>
<keyword id="KW-0547">Nucleotide-binding</keyword>
<keyword id="KW-0554">One-carbon metabolism</keyword>
<keyword id="KW-1185">Reference proteome</keyword>
<keyword id="KW-0862">Zinc</keyword>
<protein>
    <recommendedName>
        <fullName evidence="1">GTP cyclohydrolase 1</fullName>
        <ecNumber evidence="1">3.5.4.16</ecNumber>
    </recommendedName>
    <alternativeName>
        <fullName evidence="1">GTP cyclohydrolase I</fullName>
        <shortName evidence="1">GTP-CH-I</shortName>
    </alternativeName>
</protein>
<comment type="catalytic activity">
    <reaction evidence="1">
        <text>GTP + H2O = 7,8-dihydroneopterin 3'-triphosphate + formate + H(+)</text>
        <dbReference type="Rhea" id="RHEA:17473"/>
        <dbReference type="ChEBI" id="CHEBI:15377"/>
        <dbReference type="ChEBI" id="CHEBI:15378"/>
        <dbReference type="ChEBI" id="CHEBI:15740"/>
        <dbReference type="ChEBI" id="CHEBI:37565"/>
        <dbReference type="ChEBI" id="CHEBI:58462"/>
        <dbReference type="EC" id="3.5.4.16"/>
    </reaction>
</comment>
<comment type="pathway">
    <text evidence="1">Cofactor biosynthesis; 7,8-dihydroneopterin triphosphate biosynthesis; 7,8-dihydroneopterin triphosphate from GTP: step 1/1.</text>
</comment>
<comment type="subunit">
    <text evidence="1">Homomer.</text>
</comment>
<comment type="similarity">
    <text evidence="1">Belongs to the GTP cyclohydrolase I family.</text>
</comment>
<reference key="1">
    <citation type="submission" date="2007-04" db="EMBL/GenBank/DDBJ databases">
        <title>Complete genome sequence of the nitrogen-fixing bacterium Azorhizobium caulinodans ORS571.</title>
        <authorList>
            <person name="Lee K.B."/>
            <person name="Backer P.D."/>
            <person name="Aono T."/>
            <person name="Liu C.T."/>
            <person name="Suzuki S."/>
            <person name="Suzuki T."/>
            <person name="Kaneko T."/>
            <person name="Yamada M."/>
            <person name="Tabata S."/>
            <person name="Kupfer D.M."/>
            <person name="Najar F.Z."/>
            <person name="Wiley G.B."/>
            <person name="Roe B."/>
            <person name="Binnewies T."/>
            <person name="Ussery D."/>
            <person name="Vereecke D."/>
            <person name="Gevers D."/>
            <person name="Holsters M."/>
            <person name="Oyaizu H."/>
        </authorList>
    </citation>
    <scope>NUCLEOTIDE SEQUENCE [LARGE SCALE GENOMIC DNA]</scope>
    <source>
        <strain>ATCC 43989 / DSM 5975 / JCM 20966 / LMG 6465 / NBRC 14845 / NCIMB 13405 / ORS 571</strain>
    </source>
</reference>
<evidence type="ECO:0000255" key="1">
    <source>
        <dbReference type="HAMAP-Rule" id="MF_00223"/>
    </source>
</evidence>
<gene>
    <name evidence="1" type="primary">folE</name>
    <name type="ordered locus">AZC_0942</name>
</gene>
<organism>
    <name type="scientific">Azorhizobium caulinodans (strain ATCC 43989 / DSM 5975 / JCM 20966 / LMG 6465 / NBRC 14845 / NCIMB 13405 / ORS 571)</name>
    <dbReference type="NCBI Taxonomy" id="438753"/>
    <lineage>
        <taxon>Bacteria</taxon>
        <taxon>Pseudomonadati</taxon>
        <taxon>Pseudomonadota</taxon>
        <taxon>Alphaproteobacteria</taxon>
        <taxon>Hyphomicrobiales</taxon>
        <taxon>Xanthobacteraceae</taxon>
        <taxon>Azorhizobium</taxon>
    </lineage>
</organism>
<accession>A8HUG2</accession>
<feature type="chain" id="PRO_1000071759" description="GTP cyclohydrolase 1">
    <location>
        <begin position="1"/>
        <end position="218"/>
    </location>
</feature>
<feature type="binding site" evidence="1">
    <location>
        <position position="107"/>
    </location>
    <ligand>
        <name>Zn(2+)</name>
        <dbReference type="ChEBI" id="CHEBI:29105"/>
    </ligand>
</feature>
<feature type="binding site" evidence="1">
    <location>
        <position position="110"/>
    </location>
    <ligand>
        <name>Zn(2+)</name>
        <dbReference type="ChEBI" id="CHEBI:29105"/>
    </ligand>
</feature>
<feature type="binding site" evidence="1">
    <location>
        <position position="178"/>
    </location>
    <ligand>
        <name>Zn(2+)</name>
        <dbReference type="ChEBI" id="CHEBI:29105"/>
    </ligand>
</feature>
<sequence>MDAVVKLFKEQAETEAQRQMPVHRPVDAPRPSRAEAEAAVRTLLAYIGEDPHREGLQETPARVIRSYDEIYGGYALSPDDVLDRTFGEIGSFDDFVLLKDIPFTSHCEHHMVPFMGKAHVAYFPVERVVGLSKIARLVDLYARRLQTQEHLTSQITTALDEALKPRGVAVMIEAEHMCMSMRGILKPGVTTLTSQFTGAFRDDPAEQVRFITMLRGLR</sequence>